<comment type="function">
    <text evidence="3">Inhibits ADP-induced platelet aggregation in human whole blood in a concentration-dependent manner (IC(50)=89.5 nM).</text>
</comment>
<comment type="subcellular location">
    <subcellularLocation>
        <location evidence="3">Secreted</location>
    </subcellularLocation>
</comment>
<comment type="tissue specificity">
    <text evidence="6">Expressed by the venom gland.</text>
</comment>
<comment type="miscellaneous">
    <text>The disintegrin belongs to the medium disintegrin subfamily.</text>
</comment>
<comment type="similarity">
    <text evidence="5">Belongs to the venom metalloproteinase (M12B) family. P-II subfamily. P-IIa sub-subfamily.</text>
</comment>
<protein>
    <recommendedName>
        <fullName evidence="4">Disintegrin morulustatin</fullName>
    </recommendedName>
</protein>
<accession>P0DW29</accession>
<evidence type="ECO:0000250" key="1">
    <source>
        <dbReference type="UniProtKB" id="P18619"/>
    </source>
</evidence>
<evidence type="ECO:0000255" key="2">
    <source>
        <dbReference type="PROSITE-ProRule" id="PRU00068"/>
    </source>
</evidence>
<evidence type="ECO:0000269" key="3">
    <source>
    </source>
</evidence>
<evidence type="ECO:0000303" key="4">
    <source>
    </source>
</evidence>
<evidence type="ECO:0000305" key="5"/>
<evidence type="ECO:0000305" key="6">
    <source>
    </source>
</evidence>
<reference key="1">
    <citation type="journal article" date="2016" name="Rev. Cient. (Maracaibo)">
        <title>Morulustatin, a disintegrin that inhibits adp-induced platelet aggregation, isolated from the Mexican Tamaulipan rock rattlesnake (Crotalus lepidus morulus).</title>
        <authorList>
            <person name="Borja M."/>
            <person name="Galan J.A."/>
            <person name="Cantu E. Jr."/>
            <person name="Zugasti-Cruz A."/>
            <person name="Rodriguez-Acosta A."/>
            <person name="Lazcano D."/>
            <person name="Lucena S."/>
            <person name="Suntravat M."/>
            <person name="Sanchez Y.E.E."/>
        </authorList>
    </citation>
    <scope>PROTEIN SEQUENCE</scope>
    <scope>FUNCTION</scope>
    <scope>SUBCELLULAR LOCATION</scope>
    <scope>IDENTIFICATION BY MASS SPECTROMETRY</scope>
    <source>
        <tissue>Venom</tissue>
    </source>
</reference>
<keyword id="KW-1217">Cell adhesion impairing toxin</keyword>
<keyword id="KW-0903">Direct protein sequencing</keyword>
<keyword id="KW-1015">Disulfide bond</keyword>
<keyword id="KW-1199">Hemostasis impairing toxin</keyword>
<keyword id="KW-1201">Platelet aggregation inhibiting toxin</keyword>
<keyword id="KW-0964">Secreted</keyword>
<keyword id="KW-0800">Toxin</keyword>
<sequence length="37" mass="3739">LRPGAQCADGLCCDQCRAGEECDCGSPANCCDAATCK</sequence>
<dbReference type="GO" id="GO:0005576">
    <property type="term" value="C:extracellular region"/>
    <property type="evidence" value="ECO:0007669"/>
    <property type="project" value="UniProtKB-SubCell"/>
</dbReference>
<dbReference type="GO" id="GO:0090729">
    <property type="term" value="F:toxin activity"/>
    <property type="evidence" value="ECO:0007669"/>
    <property type="project" value="UniProtKB-KW"/>
</dbReference>
<proteinExistence type="evidence at protein level"/>
<name>VM2_CROMR</name>
<feature type="chain" id="PRO_0000456227" description="Disintegrin morulustatin">
    <location>
        <begin position="1" status="less than"/>
        <end position="37" status="greater than"/>
    </location>
</feature>
<feature type="disulfide bond" evidence="2">
    <location>
        <begin position="12"/>
        <end position="16"/>
    </location>
</feature>
<feature type="disulfide bond" evidence="5">
    <location>
        <begin position="13"/>
        <end status="unknown"/>
    </location>
</feature>
<feature type="disulfide bond" evidence="2">
    <location>
        <begin position="22"/>
        <end position="36"/>
    </location>
</feature>
<feature type="disulfide bond" evidence="1">
    <location>
        <begin position="24"/>
        <end position="31"/>
    </location>
</feature>
<feature type="non-consecutive residues" evidence="6">
    <location>
        <begin position="17"/>
        <end position="18"/>
    </location>
</feature>
<feature type="non-terminal residue" evidence="6">
    <location>
        <position position="1"/>
    </location>
</feature>
<feature type="non-terminal residue" evidence="6">
    <location>
        <position position="37"/>
    </location>
</feature>
<organism>
    <name type="scientific">Crotalus morulus</name>
    <name type="common">Tamaulipan rock rattlesnake</name>
    <name type="synonym">Crotalus lepidus morulus</name>
    <dbReference type="NCBI Taxonomy" id="2782198"/>
    <lineage>
        <taxon>Eukaryota</taxon>
        <taxon>Metazoa</taxon>
        <taxon>Chordata</taxon>
        <taxon>Craniata</taxon>
        <taxon>Vertebrata</taxon>
        <taxon>Euteleostomi</taxon>
        <taxon>Lepidosauria</taxon>
        <taxon>Squamata</taxon>
        <taxon>Bifurcata</taxon>
        <taxon>Unidentata</taxon>
        <taxon>Episquamata</taxon>
        <taxon>Toxicofera</taxon>
        <taxon>Serpentes</taxon>
        <taxon>Colubroidea</taxon>
        <taxon>Viperidae</taxon>
        <taxon>Crotalinae</taxon>
        <taxon>Crotalus</taxon>
    </lineage>
</organism>